<comment type="function">
    <text evidence="1">PA1b binds to basic 7S globulin (BG) and stimulates its phosphorylation activity. Involved in the signal transduction system to regulate the growth and differentiation as a hormone peptide. Toxic to various insects through binding to a high affinity binding site in the insect gut (By similarity).</text>
</comment>
<comment type="tissue specificity">
    <text evidence="3">Major component of both the cotyledons and embryonic axes of mature seeds.</text>
</comment>
<comment type="developmental stage">
    <text evidence="3">Increasing expression during seed development followed by a rapid degradation during the first days of seed germination.</text>
</comment>
<comment type="domain">
    <text evidence="1">The presence of a 'disulfide through disulfide knot' structurally defines this protein as a knottin.</text>
</comment>
<comment type="PTM">
    <text>The C-terminal glycine may be removed from PA1b.</text>
</comment>
<dbReference type="EMBL" id="M13790">
    <property type="protein sequence ID" value="AAA33639.1"/>
    <property type="molecule type" value="mRNA"/>
</dbReference>
<dbReference type="EMBL" id="AJ276882">
    <property type="protein sequence ID" value="CAB82859.1"/>
    <property type="molecule type" value="mRNA"/>
</dbReference>
<dbReference type="SMR" id="P62927"/>
<dbReference type="GO" id="GO:0045735">
    <property type="term" value="F:nutrient reservoir activity"/>
    <property type="evidence" value="ECO:0007669"/>
    <property type="project" value="UniProtKB-KW"/>
</dbReference>
<dbReference type="GO" id="GO:0090729">
    <property type="term" value="F:toxin activity"/>
    <property type="evidence" value="ECO:0007669"/>
    <property type="project" value="UniProtKB-KW"/>
</dbReference>
<dbReference type="InterPro" id="IPR012512">
    <property type="entry name" value="Albumin_I"/>
</dbReference>
<dbReference type="InterPro" id="IPR032000">
    <property type="entry name" value="Albumin_I_a"/>
</dbReference>
<dbReference type="Pfam" id="PF08027">
    <property type="entry name" value="Albumin_I"/>
    <property type="match status" value="1"/>
</dbReference>
<dbReference type="Pfam" id="PF16720">
    <property type="entry name" value="Albumin_I_a"/>
    <property type="match status" value="1"/>
</dbReference>
<dbReference type="SUPFAM" id="SSF57059">
    <property type="entry name" value="omega toxin-like"/>
    <property type="match status" value="1"/>
</dbReference>
<reference key="1">
    <citation type="journal article" date="1986" name="J. Biol. Chem.">
        <title>Gene structure, protein structure, and regulation of the synthesis of a sulfur-rich protein in pea seeds.</title>
        <authorList>
            <person name="Higgins T.J.V."/>
            <person name="Chandler P.M."/>
            <person name="Randall P.J."/>
            <person name="Spencer D."/>
            <person name="Beach L.R."/>
            <person name="Blagrove R.J."/>
            <person name="Kortt A.A."/>
            <person name="Inglis A.S."/>
        </authorList>
    </citation>
    <scope>NUCLEOTIDE SEQUENCE [MRNA]</scope>
    <scope>DEVELOPMENTAL STAGE</scope>
    <scope>TISSUE SPECIFICITY</scope>
    <source>
        <strain>cv. Greenfeast</strain>
        <tissue>Seed</tissue>
    </source>
</reference>
<reference key="2">
    <citation type="submission" date="2000-03" db="EMBL/GenBank/DDBJ databases">
        <title>Genetic loci controlling albumin synthesis in Pisum.</title>
        <authorList>
            <person name="Domoney C."/>
            <person name="Ellis N."/>
            <person name="Welham T."/>
        </authorList>
    </citation>
    <scope>NUCLEOTIDE SEQUENCE [MRNA]</scope>
    <source>
        <strain>cv. Birte</strain>
        <tissue>Cotyledon</tissue>
    </source>
</reference>
<keyword id="KW-1015">Disulfide bond</keyword>
<keyword id="KW-0960">Knottin</keyword>
<keyword id="KW-0708">Seed storage protein</keyword>
<keyword id="KW-0732">Signal</keyword>
<keyword id="KW-0758">Storage protein</keyword>
<keyword id="KW-0800">Toxin</keyword>
<feature type="signal peptide" evidence="2">
    <location>
        <begin position="1"/>
        <end position="26"/>
    </location>
</feature>
<feature type="chain" id="PRO_0000032219" description="Albumin-1 B chain b">
    <location>
        <begin position="27"/>
        <end position="63"/>
    </location>
</feature>
<feature type="propeptide" id="PRO_0000032220" evidence="2">
    <location>
        <begin position="64"/>
        <end position="69"/>
    </location>
</feature>
<feature type="chain" id="PRO_0000032221" description="Albumin-1 B chain a">
    <location>
        <begin position="70"/>
        <end position="122"/>
    </location>
</feature>
<feature type="propeptide" id="PRO_0000032222" evidence="2">
    <location>
        <begin position="123"/>
        <end position="130"/>
    </location>
</feature>
<feature type="disulfide bond" evidence="1">
    <location>
        <begin position="29"/>
        <end position="46"/>
    </location>
</feature>
<feature type="disulfide bond" evidence="1">
    <location>
        <begin position="33"/>
        <end position="48"/>
    </location>
</feature>
<feature type="disulfide bond" evidence="1">
    <location>
        <begin position="41"/>
        <end position="58"/>
    </location>
</feature>
<feature type="sequence conflict" description="In Ref. 2; CAB82859." evidence="4" ref="2">
    <original>M</original>
    <variation>I</variation>
    <location>
        <position position="10"/>
    </location>
</feature>
<feature type="sequence conflict" description="In Ref. 2; CAB82859." evidence="4" ref="2">
    <original>Q</original>
    <variation>P</variation>
    <location>
        <position position="120"/>
    </location>
</feature>
<sequence length="130" mass="13970">MASVKLASLMVLFATLGMFLTKNVGAASCNGVCSPFEMPPCGSSACRCIPVGLVVGYCRHPSGVFLRTNDEHPNLCESDADCRKKGSGNFCGHYPNPDIEYGWCFASKSEAEDFFSKITQKDLLKSVSTA</sequence>
<organism>
    <name type="scientific">Pisum sativum</name>
    <name type="common">Garden pea</name>
    <name type="synonym">Lathyrus oleraceus</name>
    <dbReference type="NCBI Taxonomy" id="3888"/>
    <lineage>
        <taxon>Eukaryota</taxon>
        <taxon>Viridiplantae</taxon>
        <taxon>Streptophyta</taxon>
        <taxon>Embryophyta</taxon>
        <taxon>Tracheophyta</taxon>
        <taxon>Spermatophyta</taxon>
        <taxon>Magnoliopsida</taxon>
        <taxon>eudicotyledons</taxon>
        <taxon>Gunneridae</taxon>
        <taxon>Pentapetalae</taxon>
        <taxon>rosids</taxon>
        <taxon>fabids</taxon>
        <taxon>Fabales</taxon>
        <taxon>Fabaceae</taxon>
        <taxon>Papilionoideae</taxon>
        <taxon>50 kb inversion clade</taxon>
        <taxon>NPAAA clade</taxon>
        <taxon>Hologalegina</taxon>
        <taxon>IRL clade</taxon>
        <taxon>Fabeae</taxon>
        <taxon>Pisum</taxon>
    </lineage>
</organism>
<name>ALB1B_PEA</name>
<proteinExistence type="evidence at transcript level"/>
<protein>
    <recommendedName>
        <fullName>Albumin-1 B</fullName>
    </recommendedName>
    <alternativeName>
        <fullName>PA1 B</fullName>
    </alternativeName>
    <component>
        <recommendedName>
            <fullName>Albumin-1 B chain b</fullName>
        </recommendedName>
        <alternativeName>
            <fullName>Leginsulin B</fullName>
        </alternativeName>
        <alternativeName>
            <fullName>PA1b B</fullName>
        </alternativeName>
    </component>
    <component>
        <recommendedName>
            <fullName>Albumin-1 B chain a</fullName>
        </recommendedName>
        <alternativeName>
            <fullName>PA1a B</fullName>
        </alternativeName>
    </component>
</protein>
<accession>P62927</accession>
<accession>P08687</accession>
<accession>Q40999</accession>
<accession>Q9M3X4</accession>
<evidence type="ECO:0000250" key="1"/>
<evidence type="ECO:0000255" key="2"/>
<evidence type="ECO:0000269" key="3">
    <source>
    </source>
</evidence>
<evidence type="ECO:0000305" key="4"/>